<proteinExistence type="inferred from homology"/>
<evidence type="ECO:0000255" key="1">
    <source>
        <dbReference type="HAMAP-Rule" id="MF_00163"/>
    </source>
</evidence>
<feature type="chain" id="PRO_0000082845" description="Peptide deformylase">
    <location>
        <begin position="1"/>
        <end position="183"/>
    </location>
</feature>
<feature type="active site" evidence="1">
    <location>
        <position position="155"/>
    </location>
</feature>
<feature type="binding site" evidence="1">
    <location>
        <position position="111"/>
    </location>
    <ligand>
        <name>Fe cation</name>
        <dbReference type="ChEBI" id="CHEBI:24875"/>
    </ligand>
</feature>
<feature type="binding site" evidence="1">
    <location>
        <position position="154"/>
    </location>
    <ligand>
        <name>Fe cation</name>
        <dbReference type="ChEBI" id="CHEBI:24875"/>
    </ligand>
</feature>
<feature type="binding site" evidence="1">
    <location>
        <position position="158"/>
    </location>
    <ligand>
        <name>Fe cation</name>
        <dbReference type="ChEBI" id="CHEBI:24875"/>
    </ligand>
</feature>
<name>DEF_STAES</name>
<keyword id="KW-0378">Hydrolase</keyword>
<keyword id="KW-0408">Iron</keyword>
<keyword id="KW-0479">Metal-binding</keyword>
<keyword id="KW-0648">Protein biosynthesis</keyword>
<protein>
    <recommendedName>
        <fullName evidence="1">Peptide deformylase</fullName>
        <shortName evidence="1">PDF</shortName>
        <ecNumber evidence="1">3.5.1.88</ecNumber>
    </recommendedName>
    <alternativeName>
        <fullName evidence="1">Polypeptide deformylase</fullName>
    </alternativeName>
</protein>
<organism>
    <name type="scientific">Staphylococcus epidermidis (strain ATCC 12228 / FDA PCI 1200)</name>
    <dbReference type="NCBI Taxonomy" id="176280"/>
    <lineage>
        <taxon>Bacteria</taxon>
        <taxon>Bacillati</taxon>
        <taxon>Bacillota</taxon>
        <taxon>Bacilli</taxon>
        <taxon>Bacillales</taxon>
        <taxon>Staphylococcaceae</taxon>
        <taxon>Staphylococcus</taxon>
    </lineage>
</organism>
<accession>Q8CPN4</accession>
<sequence length="183" mass="20810">MITMKDIIRDGHPTLREKAKELSFPLSNNDKETLRAMREFLINSQDEETAKRYGLRSGVGLAAPQINEPKRMIAVYLPDDGNGKSYDYMLVNPKIMSYSVQEAYLPTGEGCLSVDENIPGLVHRHHRVTIKAQDIDGNDVKLRLKGYPAIVFQHEIDHLNGIMFYDYIDANEPLKPHEEAVEV</sequence>
<gene>
    <name evidence="1" type="primary">def</name>
    <name type="ordered locus">SE_0789</name>
</gene>
<reference key="1">
    <citation type="journal article" date="2003" name="Mol. Microbiol.">
        <title>Genome-based analysis of virulence genes in a non-biofilm-forming Staphylococcus epidermidis strain (ATCC 12228).</title>
        <authorList>
            <person name="Zhang Y.-Q."/>
            <person name="Ren S.-X."/>
            <person name="Li H.-L."/>
            <person name="Wang Y.-X."/>
            <person name="Fu G."/>
            <person name="Yang J."/>
            <person name="Qin Z.-Q."/>
            <person name="Miao Y.-G."/>
            <person name="Wang W.-Y."/>
            <person name="Chen R.-S."/>
            <person name="Shen Y."/>
            <person name="Chen Z."/>
            <person name="Yuan Z.-H."/>
            <person name="Zhao G.-P."/>
            <person name="Qu D."/>
            <person name="Danchin A."/>
            <person name="Wen Y.-M."/>
        </authorList>
    </citation>
    <scope>NUCLEOTIDE SEQUENCE [LARGE SCALE GENOMIC DNA]</scope>
    <source>
        <strain>ATCC 12228 / FDA PCI 1200</strain>
    </source>
</reference>
<dbReference type="EC" id="3.5.1.88" evidence="1"/>
<dbReference type="EMBL" id="AE015929">
    <property type="protein sequence ID" value="AAO04386.1"/>
    <property type="molecule type" value="Genomic_DNA"/>
</dbReference>
<dbReference type="RefSeq" id="NP_764344.1">
    <property type="nucleotide sequence ID" value="NC_004461.1"/>
</dbReference>
<dbReference type="RefSeq" id="WP_001831696.1">
    <property type="nucleotide sequence ID" value="NZ_WBME01000031.1"/>
</dbReference>
<dbReference type="SMR" id="Q8CPN4"/>
<dbReference type="GeneID" id="50019072"/>
<dbReference type="KEGG" id="sep:SE_0789"/>
<dbReference type="PATRIC" id="fig|176280.10.peg.762"/>
<dbReference type="eggNOG" id="COG0242">
    <property type="taxonomic scope" value="Bacteria"/>
</dbReference>
<dbReference type="HOGENOM" id="CLU_061901_4_0_9"/>
<dbReference type="OrthoDB" id="9784988at2"/>
<dbReference type="Proteomes" id="UP000001411">
    <property type="component" value="Chromosome"/>
</dbReference>
<dbReference type="GO" id="GO:0046872">
    <property type="term" value="F:metal ion binding"/>
    <property type="evidence" value="ECO:0007669"/>
    <property type="project" value="UniProtKB-KW"/>
</dbReference>
<dbReference type="GO" id="GO:0042586">
    <property type="term" value="F:peptide deformylase activity"/>
    <property type="evidence" value="ECO:0007669"/>
    <property type="project" value="UniProtKB-UniRule"/>
</dbReference>
<dbReference type="GO" id="GO:0043686">
    <property type="term" value="P:co-translational protein modification"/>
    <property type="evidence" value="ECO:0007669"/>
    <property type="project" value="TreeGrafter"/>
</dbReference>
<dbReference type="GO" id="GO:0006412">
    <property type="term" value="P:translation"/>
    <property type="evidence" value="ECO:0007669"/>
    <property type="project" value="UniProtKB-UniRule"/>
</dbReference>
<dbReference type="CDD" id="cd00487">
    <property type="entry name" value="Pep_deformylase"/>
    <property type="match status" value="1"/>
</dbReference>
<dbReference type="FunFam" id="3.90.45.10:FF:000002">
    <property type="entry name" value="Peptide deformylase"/>
    <property type="match status" value="1"/>
</dbReference>
<dbReference type="Gene3D" id="3.90.45.10">
    <property type="entry name" value="Peptide deformylase"/>
    <property type="match status" value="1"/>
</dbReference>
<dbReference type="HAMAP" id="MF_00163">
    <property type="entry name" value="Pep_deformylase"/>
    <property type="match status" value="1"/>
</dbReference>
<dbReference type="InterPro" id="IPR023635">
    <property type="entry name" value="Peptide_deformylase"/>
</dbReference>
<dbReference type="InterPro" id="IPR036821">
    <property type="entry name" value="Peptide_deformylase_sf"/>
</dbReference>
<dbReference type="NCBIfam" id="TIGR00079">
    <property type="entry name" value="pept_deformyl"/>
    <property type="match status" value="1"/>
</dbReference>
<dbReference type="PANTHER" id="PTHR10458">
    <property type="entry name" value="PEPTIDE DEFORMYLASE"/>
    <property type="match status" value="1"/>
</dbReference>
<dbReference type="PANTHER" id="PTHR10458:SF8">
    <property type="entry name" value="PEPTIDE DEFORMYLASE 2"/>
    <property type="match status" value="1"/>
</dbReference>
<dbReference type="Pfam" id="PF01327">
    <property type="entry name" value="Pep_deformylase"/>
    <property type="match status" value="1"/>
</dbReference>
<dbReference type="PIRSF" id="PIRSF004749">
    <property type="entry name" value="Pep_def"/>
    <property type="match status" value="1"/>
</dbReference>
<dbReference type="PRINTS" id="PR01576">
    <property type="entry name" value="PDEFORMYLASE"/>
</dbReference>
<dbReference type="SUPFAM" id="SSF56420">
    <property type="entry name" value="Peptide deformylase"/>
    <property type="match status" value="1"/>
</dbReference>
<comment type="function">
    <text evidence="1">Removes the formyl group from the N-terminal Met of newly synthesized proteins. Requires at least a dipeptide for an efficient rate of reaction. N-terminal L-methionine is a prerequisite for activity but the enzyme has broad specificity at other positions.</text>
</comment>
<comment type="catalytic activity">
    <reaction evidence="1">
        <text>N-terminal N-formyl-L-methionyl-[peptide] + H2O = N-terminal L-methionyl-[peptide] + formate</text>
        <dbReference type="Rhea" id="RHEA:24420"/>
        <dbReference type="Rhea" id="RHEA-COMP:10639"/>
        <dbReference type="Rhea" id="RHEA-COMP:10640"/>
        <dbReference type="ChEBI" id="CHEBI:15377"/>
        <dbReference type="ChEBI" id="CHEBI:15740"/>
        <dbReference type="ChEBI" id="CHEBI:49298"/>
        <dbReference type="ChEBI" id="CHEBI:64731"/>
        <dbReference type="EC" id="3.5.1.88"/>
    </reaction>
</comment>
<comment type="cofactor">
    <cofactor evidence="1">
        <name>Fe(2+)</name>
        <dbReference type="ChEBI" id="CHEBI:29033"/>
    </cofactor>
    <text evidence="1">Binds 1 Fe(2+) ion.</text>
</comment>
<comment type="similarity">
    <text evidence="1">Belongs to the polypeptide deformylase family.</text>
</comment>